<reference key="1">
    <citation type="journal article" date="1994" name="Mol. Gen. Genet.">
        <title>Glutathione transferase gene family from the housefly Musca domestica.</title>
        <authorList>
            <person name="Syvanen M."/>
            <person name="Zhou Z."/>
            <person name="Wang J."/>
        </authorList>
    </citation>
    <scope>NUCLEOTIDE SEQUENCE [MRNA]</scope>
    <source>
        <strain>Cornell-R</strain>
    </source>
</reference>
<keyword id="KW-1185">Reference proteome</keyword>
<keyword id="KW-0808">Transferase</keyword>
<name>GSTT4_MUSDO</name>
<organism>
    <name type="scientific">Musca domestica</name>
    <name type="common">House fly</name>
    <dbReference type="NCBI Taxonomy" id="7370"/>
    <lineage>
        <taxon>Eukaryota</taxon>
        <taxon>Metazoa</taxon>
        <taxon>Ecdysozoa</taxon>
        <taxon>Arthropoda</taxon>
        <taxon>Hexapoda</taxon>
        <taxon>Insecta</taxon>
        <taxon>Pterygota</taxon>
        <taxon>Neoptera</taxon>
        <taxon>Endopterygota</taxon>
        <taxon>Diptera</taxon>
        <taxon>Brachycera</taxon>
        <taxon>Muscomorpha</taxon>
        <taxon>Muscoidea</taxon>
        <taxon>Muscidae</taxon>
        <taxon>Musca</taxon>
    </lineage>
</organism>
<accession>P46433</accession>
<gene>
    <name type="primary">Gst4</name>
    <name type="synonym">Gst-4</name>
</gene>
<sequence>MDFYYLPLSAPCRSVLMTAKALGIELNKKLLKLFEGGHLKPEFLKINPQHTIPTLVDNGFALWESRAIMVYLVEKYGKQDDPLYPSCPKKRALINQRLYFDMGTLYQGFANYFYPQFKEKKPADPELFKKFEVTLDFLNTFLSESKYAAGDSLTLADLALLASVSTFEAVNIDVSKYEHIARWYALVKETAPGADENWAGALEMKTLIPK</sequence>
<proteinExistence type="evidence at transcript level"/>
<feature type="chain" id="PRO_0000185968" description="Glutathione S-transferase 4">
    <location>
        <begin position="1"/>
        <end position="210"/>
    </location>
</feature>
<feature type="domain" description="GST N-terminal">
    <location>
        <begin position="1"/>
        <end position="80"/>
    </location>
</feature>
<feature type="domain" description="GST C-terminal">
    <location>
        <begin position="87"/>
        <end position="208"/>
    </location>
</feature>
<feature type="binding site" evidence="1">
    <location>
        <position position="9"/>
    </location>
    <ligand>
        <name>glutathione</name>
        <dbReference type="ChEBI" id="CHEBI:57925"/>
    </ligand>
</feature>
<feature type="binding site" evidence="1">
    <location>
        <begin position="50"/>
        <end position="52"/>
    </location>
    <ligand>
        <name>glutathione</name>
        <dbReference type="ChEBI" id="CHEBI:57925"/>
    </ligand>
</feature>
<feature type="binding site" evidence="1">
    <location>
        <begin position="64"/>
        <end position="66"/>
    </location>
    <ligand>
        <name>glutathione</name>
        <dbReference type="ChEBI" id="CHEBI:57925"/>
    </ligand>
</feature>
<protein>
    <recommendedName>
        <fullName>Glutathione S-transferase 4</fullName>
        <ecNumber>2.5.1.18</ecNumber>
    </recommendedName>
    <alternativeName>
        <fullName>GST class-theta</fullName>
    </alternativeName>
</protein>
<evidence type="ECO:0000250" key="1"/>
<evidence type="ECO:0000305" key="2"/>
<dbReference type="EC" id="2.5.1.18"/>
<dbReference type="EMBL" id="X73576">
    <property type="protein sequence ID" value="CAA51978.1"/>
    <property type="molecule type" value="mRNA"/>
</dbReference>
<dbReference type="PIR" id="S51568">
    <property type="entry name" value="S51568"/>
</dbReference>
<dbReference type="SMR" id="P46433"/>
<dbReference type="STRING" id="7370.P46433"/>
<dbReference type="VEuPathDB" id="VectorBase:MDOA006158"/>
<dbReference type="VEuPathDB" id="VectorBase:MDOMA2_010198"/>
<dbReference type="Proteomes" id="UP000694905">
    <property type="component" value="Unplaced"/>
</dbReference>
<dbReference type="GO" id="GO:0004364">
    <property type="term" value="F:glutathione transferase activity"/>
    <property type="evidence" value="ECO:0007669"/>
    <property type="project" value="UniProtKB-EC"/>
</dbReference>
<dbReference type="GO" id="GO:0006749">
    <property type="term" value="P:glutathione metabolic process"/>
    <property type="evidence" value="ECO:0007669"/>
    <property type="project" value="TreeGrafter"/>
</dbReference>
<dbReference type="CDD" id="cd03177">
    <property type="entry name" value="GST_C_Delta_Epsilon"/>
    <property type="match status" value="1"/>
</dbReference>
<dbReference type="CDD" id="cd03045">
    <property type="entry name" value="GST_N_Delta_Epsilon"/>
    <property type="match status" value="1"/>
</dbReference>
<dbReference type="FunFam" id="3.40.30.10:FF:000034">
    <property type="entry name" value="glutathione S-transferase 1"/>
    <property type="match status" value="1"/>
</dbReference>
<dbReference type="FunFam" id="1.20.1050.10:FF:000007">
    <property type="entry name" value="Glutathione S-transferase 1-1"/>
    <property type="match status" value="1"/>
</dbReference>
<dbReference type="Gene3D" id="1.20.1050.10">
    <property type="match status" value="1"/>
</dbReference>
<dbReference type="Gene3D" id="3.40.30.10">
    <property type="entry name" value="Glutaredoxin"/>
    <property type="match status" value="1"/>
</dbReference>
<dbReference type="InterPro" id="IPR010987">
    <property type="entry name" value="Glutathione-S-Trfase_C-like"/>
</dbReference>
<dbReference type="InterPro" id="IPR036282">
    <property type="entry name" value="Glutathione-S-Trfase_C_sf"/>
</dbReference>
<dbReference type="InterPro" id="IPR040079">
    <property type="entry name" value="Glutathione_S-Trfase"/>
</dbReference>
<dbReference type="InterPro" id="IPR004045">
    <property type="entry name" value="Glutathione_S-Trfase_N"/>
</dbReference>
<dbReference type="InterPro" id="IPR004046">
    <property type="entry name" value="GST_C"/>
</dbReference>
<dbReference type="InterPro" id="IPR036249">
    <property type="entry name" value="Thioredoxin-like_sf"/>
</dbReference>
<dbReference type="PANTHER" id="PTHR43969">
    <property type="entry name" value="GLUTATHIONE S TRANSFERASE D10, ISOFORM A-RELATED"/>
    <property type="match status" value="1"/>
</dbReference>
<dbReference type="PANTHER" id="PTHR43969:SF9">
    <property type="entry name" value="GLUTATHIONE S TRANSFERASE D10, ISOFORM A-RELATED"/>
    <property type="match status" value="1"/>
</dbReference>
<dbReference type="Pfam" id="PF00043">
    <property type="entry name" value="GST_C"/>
    <property type="match status" value="1"/>
</dbReference>
<dbReference type="Pfam" id="PF13417">
    <property type="entry name" value="GST_N_3"/>
    <property type="match status" value="1"/>
</dbReference>
<dbReference type="SFLD" id="SFLDS00019">
    <property type="entry name" value="Glutathione_Transferase_(cytos"/>
    <property type="match status" value="1"/>
</dbReference>
<dbReference type="SFLD" id="SFLDG01153">
    <property type="entry name" value="Main.4:_Theta-like"/>
    <property type="match status" value="1"/>
</dbReference>
<dbReference type="SUPFAM" id="SSF47616">
    <property type="entry name" value="GST C-terminal domain-like"/>
    <property type="match status" value="1"/>
</dbReference>
<dbReference type="SUPFAM" id="SSF52833">
    <property type="entry name" value="Thioredoxin-like"/>
    <property type="match status" value="1"/>
</dbReference>
<dbReference type="PROSITE" id="PS50405">
    <property type="entry name" value="GST_CTER"/>
    <property type="match status" value="1"/>
</dbReference>
<dbReference type="PROSITE" id="PS50404">
    <property type="entry name" value="GST_NTER"/>
    <property type="match status" value="1"/>
</dbReference>
<comment type="function">
    <text>Conjugation of reduced glutathione to a wide number of exogenous and endogenous hydrophobic electrophiles.</text>
</comment>
<comment type="catalytic activity">
    <reaction>
        <text>RX + glutathione = an S-substituted glutathione + a halide anion + H(+)</text>
        <dbReference type="Rhea" id="RHEA:16437"/>
        <dbReference type="ChEBI" id="CHEBI:15378"/>
        <dbReference type="ChEBI" id="CHEBI:16042"/>
        <dbReference type="ChEBI" id="CHEBI:17792"/>
        <dbReference type="ChEBI" id="CHEBI:57925"/>
        <dbReference type="ChEBI" id="CHEBI:90779"/>
        <dbReference type="EC" id="2.5.1.18"/>
    </reaction>
</comment>
<comment type="subunit">
    <text evidence="1">Homodimer.</text>
</comment>
<comment type="similarity">
    <text evidence="2">Belongs to the GST superfamily. Theta family.</text>
</comment>